<reference key="1">
    <citation type="journal article" date="2011" name="J. Bacteriol.">
        <title>Comparative genomics of 28 Salmonella enterica isolates: evidence for CRISPR-mediated adaptive sublineage evolution.</title>
        <authorList>
            <person name="Fricke W.F."/>
            <person name="Mammel M.K."/>
            <person name="McDermott P.F."/>
            <person name="Tartera C."/>
            <person name="White D.G."/>
            <person name="Leclerc J.E."/>
            <person name="Ravel J."/>
            <person name="Cebula T.A."/>
        </authorList>
    </citation>
    <scope>NUCLEOTIDE SEQUENCE [LARGE SCALE GENOMIC DNA]</scope>
    <source>
        <strain>SL254</strain>
    </source>
</reference>
<organism>
    <name type="scientific">Salmonella newport (strain SL254)</name>
    <dbReference type="NCBI Taxonomy" id="423368"/>
    <lineage>
        <taxon>Bacteria</taxon>
        <taxon>Pseudomonadati</taxon>
        <taxon>Pseudomonadota</taxon>
        <taxon>Gammaproteobacteria</taxon>
        <taxon>Enterobacterales</taxon>
        <taxon>Enterobacteriaceae</taxon>
        <taxon>Salmonella</taxon>
    </lineage>
</organism>
<accession>B4SYK7</accession>
<protein>
    <recommendedName>
        <fullName evidence="1">Leucine--tRNA ligase</fullName>
        <ecNumber evidence="1">6.1.1.4</ecNumber>
    </recommendedName>
    <alternativeName>
        <fullName evidence="1">Leucyl-tRNA synthetase</fullName>
        <shortName evidence="1">LeuRS</shortName>
    </alternativeName>
</protein>
<name>SYL_SALNS</name>
<keyword id="KW-0030">Aminoacyl-tRNA synthetase</keyword>
<keyword id="KW-0067">ATP-binding</keyword>
<keyword id="KW-0963">Cytoplasm</keyword>
<keyword id="KW-0436">Ligase</keyword>
<keyword id="KW-0547">Nucleotide-binding</keyword>
<keyword id="KW-0648">Protein biosynthesis</keyword>
<proteinExistence type="inferred from homology"/>
<comment type="catalytic activity">
    <reaction evidence="1">
        <text>tRNA(Leu) + L-leucine + ATP = L-leucyl-tRNA(Leu) + AMP + diphosphate</text>
        <dbReference type="Rhea" id="RHEA:11688"/>
        <dbReference type="Rhea" id="RHEA-COMP:9613"/>
        <dbReference type="Rhea" id="RHEA-COMP:9622"/>
        <dbReference type="ChEBI" id="CHEBI:30616"/>
        <dbReference type="ChEBI" id="CHEBI:33019"/>
        <dbReference type="ChEBI" id="CHEBI:57427"/>
        <dbReference type="ChEBI" id="CHEBI:78442"/>
        <dbReference type="ChEBI" id="CHEBI:78494"/>
        <dbReference type="ChEBI" id="CHEBI:456215"/>
        <dbReference type="EC" id="6.1.1.4"/>
    </reaction>
</comment>
<comment type="subcellular location">
    <subcellularLocation>
        <location evidence="1">Cytoplasm</location>
    </subcellularLocation>
</comment>
<comment type="similarity">
    <text evidence="1">Belongs to the class-I aminoacyl-tRNA synthetase family.</text>
</comment>
<evidence type="ECO:0000255" key="1">
    <source>
        <dbReference type="HAMAP-Rule" id="MF_00049"/>
    </source>
</evidence>
<feature type="chain" id="PRO_1000091359" description="Leucine--tRNA ligase">
    <location>
        <begin position="1"/>
        <end position="860"/>
    </location>
</feature>
<feature type="short sequence motif" description="'HIGH' region">
    <location>
        <begin position="42"/>
        <end position="52"/>
    </location>
</feature>
<feature type="short sequence motif" description="'KMSKS' region">
    <location>
        <begin position="619"/>
        <end position="623"/>
    </location>
</feature>
<feature type="binding site" evidence="1">
    <location>
        <position position="622"/>
    </location>
    <ligand>
        <name>ATP</name>
        <dbReference type="ChEBI" id="CHEBI:30616"/>
    </ligand>
</feature>
<gene>
    <name evidence="1" type="primary">leuS</name>
    <name type="ordered locus">SNSL254_A0705</name>
</gene>
<dbReference type="EC" id="6.1.1.4" evidence="1"/>
<dbReference type="EMBL" id="CP001113">
    <property type="protein sequence ID" value="ACF65602.1"/>
    <property type="molecule type" value="Genomic_DNA"/>
</dbReference>
<dbReference type="RefSeq" id="WP_001157916.1">
    <property type="nucleotide sequence ID" value="NZ_CCMR01000003.1"/>
</dbReference>
<dbReference type="SMR" id="B4SYK7"/>
<dbReference type="KEGG" id="see:SNSL254_A0705"/>
<dbReference type="HOGENOM" id="CLU_004427_0_0_6"/>
<dbReference type="Proteomes" id="UP000008824">
    <property type="component" value="Chromosome"/>
</dbReference>
<dbReference type="GO" id="GO:0005829">
    <property type="term" value="C:cytosol"/>
    <property type="evidence" value="ECO:0007669"/>
    <property type="project" value="TreeGrafter"/>
</dbReference>
<dbReference type="GO" id="GO:0002161">
    <property type="term" value="F:aminoacyl-tRNA deacylase activity"/>
    <property type="evidence" value="ECO:0007669"/>
    <property type="project" value="InterPro"/>
</dbReference>
<dbReference type="GO" id="GO:0005524">
    <property type="term" value="F:ATP binding"/>
    <property type="evidence" value="ECO:0007669"/>
    <property type="project" value="UniProtKB-UniRule"/>
</dbReference>
<dbReference type="GO" id="GO:0004823">
    <property type="term" value="F:leucine-tRNA ligase activity"/>
    <property type="evidence" value="ECO:0007669"/>
    <property type="project" value="UniProtKB-UniRule"/>
</dbReference>
<dbReference type="GO" id="GO:0006429">
    <property type="term" value="P:leucyl-tRNA aminoacylation"/>
    <property type="evidence" value="ECO:0007669"/>
    <property type="project" value="UniProtKB-UniRule"/>
</dbReference>
<dbReference type="CDD" id="cd07958">
    <property type="entry name" value="Anticodon_Ia_Leu_BEm"/>
    <property type="match status" value="1"/>
</dbReference>
<dbReference type="CDD" id="cd00812">
    <property type="entry name" value="LeuRS_core"/>
    <property type="match status" value="1"/>
</dbReference>
<dbReference type="FunFam" id="1.10.730.10:FF:000002">
    <property type="entry name" value="Leucine--tRNA ligase"/>
    <property type="match status" value="2"/>
</dbReference>
<dbReference type="FunFam" id="2.20.28.290:FF:000001">
    <property type="entry name" value="Leucine--tRNA ligase"/>
    <property type="match status" value="1"/>
</dbReference>
<dbReference type="FunFam" id="3.10.20.590:FF:000001">
    <property type="entry name" value="Leucine--tRNA ligase"/>
    <property type="match status" value="1"/>
</dbReference>
<dbReference type="FunFam" id="3.40.50.620:FF:000003">
    <property type="entry name" value="Leucine--tRNA ligase"/>
    <property type="match status" value="1"/>
</dbReference>
<dbReference type="FunFam" id="3.40.50.620:FF:000124">
    <property type="entry name" value="Leucine--tRNA ligase"/>
    <property type="match status" value="1"/>
</dbReference>
<dbReference type="FunFam" id="3.90.740.10:FF:000012">
    <property type="entry name" value="Leucine--tRNA ligase"/>
    <property type="match status" value="1"/>
</dbReference>
<dbReference type="Gene3D" id="2.20.28.290">
    <property type="match status" value="1"/>
</dbReference>
<dbReference type="Gene3D" id="3.10.20.590">
    <property type="match status" value="1"/>
</dbReference>
<dbReference type="Gene3D" id="3.40.50.620">
    <property type="entry name" value="HUPs"/>
    <property type="match status" value="2"/>
</dbReference>
<dbReference type="Gene3D" id="1.10.730.10">
    <property type="entry name" value="Isoleucyl-tRNA Synthetase, Domain 1"/>
    <property type="match status" value="2"/>
</dbReference>
<dbReference type="HAMAP" id="MF_00049_B">
    <property type="entry name" value="Leu_tRNA_synth_B"/>
    <property type="match status" value="1"/>
</dbReference>
<dbReference type="InterPro" id="IPR001412">
    <property type="entry name" value="aa-tRNA-synth_I_CS"/>
</dbReference>
<dbReference type="InterPro" id="IPR002300">
    <property type="entry name" value="aa-tRNA-synth_Ia"/>
</dbReference>
<dbReference type="InterPro" id="IPR002302">
    <property type="entry name" value="Leu-tRNA-ligase"/>
</dbReference>
<dbReference type="InterPro" id="IPR025709">
    <property type="entry name" value="Leu_tRNA-synth_edit"/>
</dbReference>
<dbReference type="InterPro" id="IPR013155">
    <property type="entry name" value="M/V/L/I-tRNA-synth_anticd-bd"/>
</dbReference>
<dbReference type="InterPro" id="IPR015413">
    <property type="entry name" value="Methionyl/Leucyl_tRNA_Synth"/>
</dbReference>
<dbReference type="InterPro" id="IPR014729">
    <property type="entry name" value="Rossmann-like_a/b/a_fold"/>
</dbReference>
<dbReference type="InterPro" id="IPR009080">
    <property type="entry name" value="tRNAsynth_Ia_anticodon-bd"/>
</dbReference>
<dbReference type="InterPro" id="IPR009008">
    <property type="entry name" value="Val/Leu/Ile-tRNA-synth_edit"/>
</dbReference>
<dbReference type="NCBIfam" id="TIGR00396">
    <property type="entry name" value="leuS_bact"/>
    <property type="match status" value="1"/>
</dbReference>
<dbReference type="PANTHER" id="PTHR43740:SF2">
    <property type="entry name" value="LEUCINE--TRNA LIGASE, MITOCHONDRIAL"/>
    <property type="match status" value="1"/>
</dbReference>
<dbReference type="PANTHER" id="PTHR43740">
    <property type="entry name" value="LEUCYL-TRNA SYNTHETASE"/>
    <property type="match status" value="1"/>
</dbReference>
<dbReference type="Pfam" id="PF08264">
    <property type="entry name" value="Anticodon_1"/>
    <property type="match status" value="1"/>
</dbReference>
<dbReference type="Pfam" id="PF00133">
    <property type="entry name" value="tRNA-synt_1"/>
    <property type="match status" value="2"/>
</dbReference>
<dbReference type="Pfam" id="PF13603">
    <property type="entry name" value="tRNA-synt_1_2"/>
    <property type="match status" value="1"/>
</dbReference>
<dbReference type="Pfam" id="PF09334">
    <property type="entry name" value="tRNA-synt_1g"/>
    <property type="match status" value="1"/>
</dbReference>
<dbReference type="PRINTS" id="PR00985">
    <property type="entry name" value="TRNASYNTHLEU"/>
</dbReference>
<dbReference type="SUPFAM" id="SSF47323">
    <property type="entry name" value="Anticodon-binding domain of a subclass of class I aminoacyl-tRNA synthetases"/>
    <property type="match status" value="1"/>
</dbReference>
<dbReference type="SUPFAM" id="SSF52374">
    <property type="entry name" value="Nucleotidylyl transferase"/>
    <property type="match status" value="1"/>
</dbReference>
<dbReference type="SUPFAM" id="SSF50677">
    <property type="entry name" value="ValRS/IleRS/LeuRS editing domain"/>
    <property type="match status" value="1"/>
</dbReference>
<dbReference type="PROSITE" id="PS00178">
    <property type="entry name" value="AA_TRNA_LIGASE_I"/>
    <property type="match status" value="1"/>
</dbReference>
<sequence>MQEQYRPEEIESKVQLHWDEKRTFEVTEDESKEKYYCLSMLPYPSGRLHMGHVRNYTIGDVVARYQRMLGKNVLQPIGWDAFGLPAEGAAVKNNTAPAPWTYDNIAYMKNQLKTLGFGYDWSREIATCTPEYYRWEQKFFTELYKKGLVYKKTSAVNWCPNDQTVLANEQVIDGCCWRCDTKVERKEIPQWFIKITAYADELLRDLDKLDHWPDTVKTMQRNWIGRSEGVEITFDVKGYDNTLTVYTTRPDTFMGATYLAVAAGHPLAQKAAANNAELAAFIDECRNTKVAEAEMATMEKKGVDTGYKAIHPLTGEEIPVWAANFVLMEYGTGAVMAVPGHDQRDYEFASKYGLTIKPVILAADGSEPDLSEQALTEKGVLFNSGEFDGLAFEAAFNAIADKLAEKGVGERKVNYRLRDWGVSRQRYWGAPIPMVTLEDGTVLPTPEDQLPVILPEDVVMDGITSPIKADPEWAKTTVNGMPALRETDTFDTFMESSWYYARYTCPQYQEGMLDSKAANYWLPVDIYIGGIEHAIMHLLYFRFFHKLMRDAGMVTSDEPAKQLLCQGMVLADAFYYVGENGERNWVSPVDAIVERDEKGRIVKAKDAAGHELVYTGMSKMSKSKNNGIDPQVMVERYGADTVRLFMMFASPADMTLEWQESGVEGANRFIKRVWKLVYEHTAKGPVAALNVDALSEDQKALRRDVHKTIAKVTDDIGRRQTFNTAIAAIMELMNKLAKAPQEGEQDRALLQEALQAVVRMLNPFTPHVCFTLWQELGGEGDIDNAPWPVADEQAMVENTTLVVVQVNGKVRGKITVAVDATEEQVRERAGQEHLVAKYLDGVTVRKVIYVPGKLLNLVVG</sequence>